<evidence type="ECO:0000255" key="1">
    <source>
        <dbReference type="HAMAP-Rule" id="MF_00185"/>
    </source>
</evidence>
<comment type="function">
    <text evidence="1">Catalyzes the transfer of a dimethylallyl group onto the adenine at position 37 in tRNAs that read codons beginning with uridine, leading to the formation of N6-(dimethylallyl)adenosine (i(6)A).</text>
</comment>
<comment type="catalytic activity">
    <reaction evidence="1">
        <text>adenosine(37) in tRNA + dimethylallyl diphosphate = N(6)-dimethylallyladenosine(37) in tRNA + diphosphate</text>
        <dbReference type="Rhea" id="RHEA:26482"/>
        <dbReference type="Rhea" id="RHEA-COMP:10162"/>
        <dbReference type="Rhea" id="RHEA-COMP:10375"/>
        <dbReference type="ChEBI" id="CHEBI:33019"/>
        <dbReference type="ChEBI" id="CHEBI:57623"/>
        <dbReference type="ChEBI" id="CHEBI:74411"/>
        <dbReference type="ChEBI" id="CHEBI:74415"/>
        <dbReference type="EC" id="2.5.1.75"/>
    </reaction>
</comment>
<comment type="cofactor">
    <cofactor evidence="1">
        <name>Mg(2+)</name>
        <dbReference type="ChEBI" id="CHEBI:18420"/>
    </cofactor>
</comment>
<comment type="subunit">
    <text evidence="1">Monomer.</text>
</comment>
<comment type="similarity">
    <text evidence="1">Belongs to the IPP transferase family.</text>
</comment>
<sequence>MNKNPFIVCLMGPTASGKTDLAIALARKLPFEIISVDSAMVYRGLDIGTAKPNEEELQLTSHRLINICDPSFPYSAGQFYKDALSEIKTIEIRNRTPLLVGGTMLYFHILEQGFSDLPTADETVRKKIQEEAAQHGWAKIHERLNAIDPKSAARINPNDAQRIQRAFEIYETTGQPLSSYQSLKRFKALPYQFINLILAPENRSWLHQRIEKRFDQMLKNNFLEEVRQLYNRGDLNSDLPAIRTVGYRQVWKYLSGEYDYEMMRHKAIAATRQLAKRQLTWLRRWPDAKWFNSEDKDLISQVVDYLKGIGM</sequence>
<protein>
    <recommendedName>
        <fullName evidence="1">tRNA dimethylallyltransferase</fullName>
        <ecNumber evidence="1">2.5.1.75</ecNumber>
    </recommendedName>
    <alternativeName>
        <fullName evidence="1">Dimethylallyl diphosphate:tRNA dimethylallyltransferase</fullName>
        <shortName evidence="1">DMAPP:tRNA dimethylallyltransferase</shortName>
        <shortName evidence="1">DMATase</shortName>
    </alternativeName>
    <alternativeName>
        <fullName evidence="1">Isopentenyl-diphosphate:tRNA isopentenyltransferase</fullName>
        <shortName evidence="1">IPP transferase</shortName>
        <shortName evidence="1">IPPT</shortName>
        <shortName evidence="1">IPTase</shortName>
    </alternativeName>
</protein>
<feature type="chain" id="PRO_1000077394" description="tRNA dimethylallyltransferase">
    <location>
        <begin position="1"/>
        <end position="311"/>
    </location>
</feature>
<feature type="region of interest" description="Interaction with substrate tRNA" evidence="1">
    <location>
        <begin position="37"/>
        <end position="40"/>
    </location>
</feature>
<feature type="region of interest" description="Interaction with substrate tRNA" evidence="1">
    <location>
        <begin position="161"/>
        <end position="165"/>
    </location>
</feature>
<feature type="binding site" evidence="1">
    <location>
        <begin position="12"/>
        <end position="19"/>
    </location>
    <ligand>
        <name>ATP</name>
        <dbReference type="ChEBI" id="CHEBI:30616"/>
    </ligand>
</feature>
<feature type="binding site" evidence="1">
    <location>
        <begin position="14"/>
        <end position="19"/>
    </location>
    <ligand>
        <name>substrate</name>
    </ligand>
</feature>
<feature type="site" description="Interaction with substrate tRNA" evidence="1">
    <location>
        <position position="103"/>
    </location>
</feature>
<feature type="site" description="Interaction with substrate tRNA" evidence="1">
    <location>
        <position position="125"/>
    </location>
</feature>
<keyword id="KW-0067">ATP-binding</keyword>
<keyword id="KW-0460">Magnesium</keyword>
<keyword id="KW-0547">Nucleotide-binding</keyword>
<keyword id="KW-0808">Transferase</keyword>
<keyword id="KW-0819">tRNA processing</keyword>
<proteinExistence type="inferred from homology"/>
<reference key="1">
    <citation type="submission" date="2007-11" db="EMBL/GenBank/DDBJ databases">
        <title>Genome sequencing of phylogenetically and phenotypically diverse Coxiella burnetii isolates.</title>
        <authorList>
            <person name="Seshadri R."/>
            <person name="Samuel J.E."/>
        </authorList>
    </citation>
    <scope>NUCLEOTIDE SEQUENCE [LARGE SCALE GENOMIC DNA]</scope>
    <source>
        <strain>RSA 331 / Henzerling II</strain>
    </source>
</reference>
<dbReference type="EC" id="2.5.1.75" evidence="1"/>
<dbReference type="EMBL" id="CP000890">
    <property type="protein sequence ID" value="ABX77599.1"/>
    <property type="molecule type" value="Genomic_DNA"/>
</dbReference>
<dbReference type="SMR" id="A9NCK4"/>
<dbReference type="KEGG" id="cbs:COXBURSA331_A0846"/>
<dbReference type="HOGENOM" id="CLU_032616_0_0_6"/>
<dbReference type="GO" id="GO:0005524">
    <property type="term" value="F:ATP binding"/>
    <property type="evidence" value="ECO:0007669"/>
    <property type="project" value="UniProtKB-UniRule"/>
</dbReference>
<dbReference type="GO" id="GO:0052381">
    <property type="term" value="F:tRNA dimethylallyltransferase activity"/>
    <property type="evidence" value="ECO:0007669"/>
    <property type="project" value="UniProtKB-UniRule"/>
</dbReference>
<dbReference type="GO" id="GO:0006400">
    <property type="term" value="P:tRNA modification"/>
    <property type="evidence" value="ECO:0007669"/>
    <property type="project" value="TreeGrafter"/>
</dbReference>
<dbReference type="FunFam" id="1.10.20.140:FF:000001">
    <property type="entry name" value="tRNA dimethylallyltransferase"/>
    <property type="match status" value="1"/>
</dbReference>
<dbReference type="Gene3D" id="1.10.20.140">
    <property type="match status" value="1"/>
</dbReference>
<dbReference type="Gene3D" id="3.40.50.300">
    <property type="entry name" value="P-loop containing nucleotide triphosphate hydrolases"/>
    <property type="match status" value="1"/>
</dbReference>
<dbReference type="HAMAP" id="MF_00185">
    <property type="entry name" value="IPP_trans"/>
    <property type="match status" value="1"/>
</dbReference>
<dbReference type="InterPro" id="IPR039657">
    <property type="entry name" value="Dimethylallyltransferase"/>
</dbReference>
<dbReference type="InterPro" id="IPR018022">
    <property type="entry name" value="IPT"/>
</dbReference>
<dbReference type="InterPro" id="IPR027417">
    <property type="entry name" value="P-loop_NTPase"/>
</dbReference>
<dbReference type="NCBIfam" id="TIGR00174">
    <property type="entry name" value="miaA"/>
    <property type="match status" value="1"/>
</dbReference>
<dbReference type="PANTHER" id="PTHR11088">
    <property type="entry name" value="TRNA DIMETHYLALLYLTRANSFERASE"/>
    <property type="match status" value="1"/>
</dbReference>
<dbReference type="PANTHER" id="PTHR11088:SF60">
    <property type="entry name" value="TRNA DIMETHYLALLYLTRANSFERASE"/>
    <property type="match status" value="1"/>
</dbReference>
<dbReference type="Pfam" id="PF01715">
    <property type="entry name" value="IPPT"/>
    <property type="match status" value="1"/>
</dbReference>
<dbReference type="SUPFAM" id="SSF52540">
    <property type="entry name" value="P-loop containing nucleoside triphosphate hydrolases"/>
    <property type="match status" value="2"/>
</dbReference>
<name>MIAA_COXBR</name>
<organism>
    <name type="scientific">Coxiella burnetii (strain RSA 331 / Henzerling II)</name>
    <dbReference type="NCBI Taxonomy" id="360115"/>
    <lineage>
        <taxon>Bacteria</taxon>
        <taxon>Pseudomonadati</taxon>
        <taxon>Pseudomonadota</taxon>
        <taxon>Gammaproteobacteria</taxon>
        <taxon>Legionellales</taxon>
        <taxon>Coxiellaceae</taxon>
        <taxon>Coxiella</taxon>
    </lineage>
</organism>
<gene>
    <name evidence="1" type="primary">miaA</name>
    <name type="ordered locus">COXBURSA331_A0846</name>
</gene>
<accession>A9NCK4</accession>